<feature type="chain" id="PRO_0000354882" description="Catalase-peroxidase">
    <location>
        <begin position="1"/>
        <end position="728"/>
    </location>
</feature>
<feature type="region of interest" description="Disordered" evidence="2">
    <location>
        <begin position="1"/>
        <end position="26"/>
    </location>
</feature>
<feature type="active site" description="Proton acceptor" evidence="1">
    <location>
        <position position="97"/>
    </location>
</feature>
<feature type="binding site" description="axial binding residue" evidence="1">
    <location>
        <position position="259"/>
    </location>
    <ligand>
        <name>heme b</name>
        <dbReference type="ChEBI" id="CHEBI:60344"/>
    </ligand>
    <ligandPart>
        <name>Fe</name>
        <dbReference type="ChEBI" id="CHEBI:18248"/>
    </ligandPart>
</feature>
<feature type="site" description="Transition state stabilizer" evidence="1">
    <location>
        <position position="93"/>
    </location>
</feature>
<feature type="cross-link" description="Tryptophyl-tyrosyl-methioninium (Trp-Tyr) (with M-244)" evidence="1">
    <location>
        <begin position="96"/>
        <end position="218"/>
    </location>
</feature>
<feature type="cross-link" description="Tryptophyl-tyrosyl-methioninium (Tyr-Met) (with W-96)" evidence="1">
    <location>
        <begin position="218"/>
        <end position="244"/>
    </location>
</feature>
<feature type="sequence conflict" description="In Ref. 1; AAL93241." evidence="4" ref="1">
    <original>EFKKLDLDALKKD</original>
    <variation>DIQEARSRRAEKG</variation>
    <location>
        <begin position="56"/>
        <end position="68"/>
    </location>
</feature>
<feature type="sequence conflict" description="In Ref. 1; AAL93241." evidence="4" ref="1">
    <original>Q</original>
    <variation>H</variation>
    <location>
        <position position="113"/>
    </location>
</feature>
<feature type="sequence conflict" description="In Ref. 1; AAL93241." evidence="4" ref="1">
    <original>Q</original>
    <variation>H</variation>
    <location>
        <position position="116"/>
    </location>
</feature>
<feature type="sequence conflict" description="In Ref. 1; AAL93241." evidence="4" ref="1">
    <original>F</original>
    <variation>L</variation>
    <location>
        <position position="170"/>
    </location>
</feature>
<feature type="sequence conflict" description="In Ref. 1; AAL93241." evidence="4" ref="1">
    <original>R</original>
    <variation>C</variation>
    <location>
        <position position="176"/>
    </location>
</feature>
<feature type="sequence conflict" description="In Ref. 1; AAL93241." evidence="4" ref="1">
    <original>Q</original>
    <variation>H</variation>
    <location>
        <position position="204"/>
    </location>
</feature>
<feature type="sequence conflict" description="In Ref. 1; AAL93241." evidence="4" ref="1">
    <original>E</original>
    <variation>N</variation>
    <location>
        <position position="207"/>
    </location>
</feature>
<feature type="sequence conflict" description="In Ref. 1; AAL93241." evidence="4" ref="1">
    <original>F</original>
    <variation>L</variation>
    <location>
        <position position="241"/>
    </location>
</feature>
<feature type="sequence conflict" description="In Ref. 1; AAL93241." evidence="4" ref="1">
    <original>L</original>
    <variation>F</variation>
    <location>
        <position position="415"/>
    </location>
</feature>
<feature type="sequence conflict" description="In Ref. 1; AAL93241." evidence="4" ref="1">
    <original>V</original>
    <variation>L</variation>
    <location>
        <position position="419"/>
    </location>
</feature>
<feature type="sequence conflict" description="In Ref. 1; AAL93241." evidence="4" ref="1">
    <original>L</original>
    <variation>F</variation>
    <location>
        <position position="437"/>
    </location>
</feature>
<feature type="sequence conflict" description="In Ref. 1; AAL93241." evidence="4" ref="1">
    <original>E</original>
    <variation>K</variation>
    <location>
        <position position="540"/>
    </location>
</feature>
<feature type="sequence conflict" description="In Ref. 1; AAL93241." evidence="4" ref="1">
    <original>A</original>
    <variation>M</variation>
    <location>
        <position position="598"/>
    </location>
</feature>
<feature type="sequence conflict" description="In Ref. 1; AAL93241." evidence="4" ref="1">
    <original>AT</original>
    <variation>GD</variation>
    <location>
        <begin position="652"/>
        <end position="653"/>
    </location>
</feature>
<feature type="sequence conflict" description="In Ref. 1; AAL93241." evidence="4" ref="1">
    <original>TGKEGVYEGRD</original>
    <variation>PERKGLYRPR</variation>
    <location>
        <begin position="659"/>
        <end position="669"/>
    </location>
</feature>
<feature type="sequence conflict" description="In Ref. 1; AAL93241." evidence="4" ref="1">
    <original>V</original>
    <variation>R</variation>
    <location>
        <position position="728"/>
    </location>
</feature>
<organism>
    <name type="scientific">Rhizobium etli (strain ATCC 51251 / DSM 11541 / JCM 21823 / NBRC 15573 / CFN 42)</name>
    <dbReference type="NCBI Taxonomy" id="347834"/>
    <lineage>
        <taxon>Bacteria</taxon>
        <taxon>Pseudomonadati</taxon>
        <taxon>Pseudomonadota</taxon>
        <taxon>Alphaproteobacteria</taxon>
        <taxon>Hyphomicrobiales</taxon>
        <taxon>Rhizobiaceae</taxon>
        <taxon>Rhizobium/Agrobacterium group</taxon>
        <taxon>Rhizobium</taxon>
    </lineage>
</organism>
<reference key="1">
    <citation type="journal article" date="2003" name="Microbiology">
        <title>Only one catalase, katG, is detectable in Rhizobium etli, and is encoded along with the regulator OxyR on a plasmid replicon.</title>
        <authorList>
            <person name="Del Carmen Vargas M."/>
            <person name="Encarnacion S."/>
            <person name="Davalos A."/>
            <person name="Reyes-Perez A."/>
            <person name="Mora Y."/>
            <person name="Garcia-De Los Santos A."/>
            <person name="Brom S."/>
            <person name="Mora J."/>
        </authorList>
    </citation>
    <scope>NUCLEOTIDE SEQUENCE [GENOMIC DNA]</scope>
    <scope>FUNCTION</scope>
    <scope>INDUCTION</scope>
    <source>
        <strain>CE3</strain>
        <plasmid>p42f</plasmid>
    </source>
</reference>
<reference key="2">
    <citation type="journal article" date="2006" name="Proc. Natl. Acad. Sci. U.S.A.">
        <title>The partitioned Rhizobium etli genome: genetic and metabolic redundancy in seven interacting replicons.</title>
        <authorList>
            <person name="Gonzalez V."/>
            <person name="Santamaria R.I."/>
            <person name="Bustos P."/>
            <person name="Hernandez-Gonzalez I."/>
            <person name="Medrano-Soto A."/>
            <person name="Moreno-Hagelsieb G."/>
            <person name="Janga S.C."/>
            <person name="Ramirez M.A."/>
            <person name="Jimenez-Jacinto V."/>
            <person name="Collado-Vides J."/>
            <person name="Davila G."/>
        </authorList>
    </citation>
    <scope>NUCLEOTIDE SEQUENCE [LARGE SCALE GENOMIC DNA]</scope>
    <source>
        <strain>ATCC 51251 / DSM 11541 / JCM 21823 / NBRC 15573 / CFN 42</strain>
    </source>
</reference>
<comment type="function">
    <text evidence="1 3">Bifunctional enzyme with both catalase and broad-spectrum peroxidase activity. Important for stationary phase survival.</text>
</comment>
<comment type="catalytic activity">
    <reaction evidence="1">
        <text>H2O2 + AH2 = A + 2 H2O</text>
        <dbReference type="Rhea" id="RHEA:30275"/>
        <dbReference type="ChEBI" id="CHEBI:13193"/>
        <dbReference type="ChEBI" id="CHEBI:15377"/>
        <dbReference type="ChEBI" id="CHEBI:16240"/>
        <dbReference type="ChEBI" id="CHEBI:17499"/>
        <dbReference type="EC" id="1.11.1.21"/>
    </reaction>
</comment>
<comment type="catalytic activity">
    <reaction evidence="1">
        <text>2 H2O2 = O2 + 2 H2O</text>
        <dbReference type="Rhea" id="RHEA:20309"/>
        <dbReference type="ChEBI" id="CHEBI:15377"/>
        <dbReference type="ChEBI" id="CHEBI:15379"/>
        <dbReference type="ChEBI" id="CHEBI:16240"/>
        <dbReference type="EC" id="1.11.1.21"/>
    </reaction>
</comment>
<comment type="cofactor">
    <cofactor evidence="1">
        <name>heme b</name>
        <dbReference type="ChEBI" id="CHEBI:60344"/>
    </cofactor>
    <text evidence="1">Binds 1 heme b (iron(II)-protoporphyrin IX) group per dimer.</text>
</comment>
<comment type="subunit">
    <text evidence="1">Homodimer or homotetramer.</text>
</comment>
<comment type="induction">
    <text evidence="3">Expression increases from exponential to early- and late-stationary phase. Induced by H(2)O(2).</text>
</comment>
<comment type="PTM">
    <text evidence="1">Formation of the three residue Trp-Tyr-Met cross-link is important for the catalase, but not the peroxidase activity of the enzyme.</text>
</comment>
<comment type="similarity">
    <text evidence="1">Belongs to the peroxidase family. Peroxidase/catalase subfamily.</text>
</comment>
<name>KATG_RHIEC</name>
<gene>
    <name evidence="1" type="primary">katG</name>
    <name type="ordered locus">RHE_PF00004</name>
</gene>
<keyword id="KW-0349">Heme</keyword>
<keyword id="KW-0376">Hydrogen peroxide</keyword>
<keyword id="KW-0408">Iron</keyword>
<keyword id="KW-0479">Metal-binding</keyword>
<keyword id="KW-0560">Oxidoreductase</keyword>
<keyword id="KW-0575">Peroxidase</keyword>
<keyword id="KW-0614">Plasmid</keyword>
<keyword id="KW-1185">Reference proteome</keyword>
<geneLocation type="plasmid">
    <name>p42f</name>
</geneLocation>
<sequence>MDNPTDTAGKCPVAHGNKPRGPSNRDWWPNQLNVQILHHNSGRADPLGKDFDYAEEFKKLDLDALKKDLHALMTDSQDWWPADFGHYGGLFIRMAWHSAGTYRITDGRGGAGQGQQRFAPLNSWPDNANLDKARRLLWPIKQKYGNRISWADLLILTGNVALESMGFKTFGFAGGRADVWEPEELYWGPEGTWLGDERYSGERQLAEPLGAVQMGLIYVNPEGPNGNPDPVAAARDIRETFARMAMNDEETVALIAGGHTFGKTHGAGDPSFIGAEPEGGAIEDQGLGWKSSFGTGVGKDAITAGLEVTWSQTPTKWSNYFFENLFAYEWELTKSPAGAHQWRAKNAEASIPDAYEPGKKHVPTMLTTDLSLRFDPIYEKISRRFLENPDQFADAFARAWFKLTHRDMGPKVRYLGPEVPAEDLIWQDVIPAVDHPLVDDKDIAELKAKVLATGLTVQELVSTAWASASTFRGSDKRGGANGARIRLAPQKDWEANQPAQLAKVLGVLEGIQKDFNAAQTGAKKISLADLIVLAGAAGVEKAAAAGGNAVSVPLTPGRMDASEAQTDAHSFAPLEPRIDGFRNYVNGKRLQFMKPEEALVDRAQLLTLTGPEMTVLVGGLRVLKAGNPEHGVFTSRPETLTNDFFVNLLDVATQWVPATGKEGVYEGRDRKTGAAKWTGTRVDLIFGSHSQLRAFAEVYGQADAKQKFVKDFVAAWNKVMNADRFDLV</sequence>
<dbReference type="EC" id="1.11.1.21" evidence="1"/>
<dbReference type="EMBL" id="AF486647">
    <property type="protein sequence ID" value="AAL93241.1"/>
    <property type="molecule type" value="Genomic_DNA"/>
</dbReference>
<dbReference type="EMBL" id="CP000138">
    <property type="protein sequence ID" value="ABC93898.1"/>
    <property type="molecule type" value="Genomic_DNA"/>
</dbReference>
<dbReference type="RefSeq" id="WP_011428316.1">
    <property type="nucleotide sequence ID" value="NC_007766.1"/>
</dbReference>
<dbReference type="SMR" id="Q2JZT8"/>
<dbReference type="PeroxiBase" id="2371">
    <property type="entry name" value="RetCP01_CFN42"/>
</dbReference>
<dbReference type="KEGG" id="ret:RHE_PF00004"/>
<dbReference type="HOGENOM" id="CLU_025424_2_0_5"/>
<dbReference type="OrthoDB" id="9759743at2"/>
<dbReference type="Proteomes" id="UP000001936">
    <property type="component" value="Plasmid p42f"/>
</dbReference>
<dbReference type="GO" id="GO:0005829">
    <property type="term" value="C:cytosol"/>
    <property type="evidence" value="ECO:0007669"/>
    <property type="project" value="TreeGrafter"/>
</dbReference>
<dbReference type="GO" id="GO:0004096">
    <property type="term" value="F:catalase activity"/>
    <property type="evidence" value="ECO:0007669"/>
    <property type="project" value="UniProtKB-UniRule"/>
</dbReference>
<dbReference type="GO" id="GO:0020037">
    <property type="term" value="F:heme binding"/>
    <property type="evidence" value="ECO:0007669"/>
    <property type="project" value="InterPro"/>
</dbReference>
<dbReference type="GO" id="GO:0046872">
    <property type="term" value="F:metal ion binding"/>
    <property type="evidence" value="ECO:0007669"/>
    <property type="project" value="UniProtKB-KW"/>
</dbReference>
<dbReference type="GO" id="GO:0070301">
    <property type="term" value="P:cellular response to hydrogen peroxide"/>
    <property type="evidence" value="ECO:0007669"/>
    <property type="project" value="TreeGrafter"/>
</dbReference>
<dbReference type="GO" id="GO:0042744">
    <property type="term" value="P:hydrogen peroxide catabolic process"/>
    <property type="evidence" value="ECO:0007669"/>
    <property type="project" value="UniProtKB-KW"/>
</dbReference>
<dbReference type="CDD" id="cd00649">
    <property type="entry name" value="catalase_peroxidase_1"/>
    <property type="match status" value="1"/>
</dbReference>
<dbReference type="CDD" id="cd08200">
    <property type="entry name" value="catalase_peroxidase_2"/>
    <property type="match status" value="1"/>
</dbReference>
<dbReference type="FunFam" id="1.10.420.10:FF:000002">
    <property type="entry name" value="Catalase-peroxidase"/>
    <property type="match status" value="1"/>
</dbReference>
<dbReference type="FunFam" id="1.10.420.10:FF:000004">
    <property type="entry name" value="Catalase-peroxidase"/>
    <property type="match status" value="1"/>
</dbReference>
<dbReference type="FunFam" id="1.10.520.10:FF:000002">
    <property type="entry name" value="Catalase-peroxidase"/>
    <property type="match status" value="1"/>
</dbReference>
<dbReference type="Gene3D" id="1.10.520.10">
    <property type="match status" value="2"/>
</dbReference>
<dbReference type="Gene3D" id="1.10.420.10">
    <property type="entry name" value="Peroxidase, domain 2"/>
    <property type="match status" value="2"/>
</dbReference>
<dbReference type="HAMAP" id="MF_01961">
    <property type="entry name" value="Catal_peroxid"/>
    <property type="match status" value="1"/>
</dbReference>
<dbReference type="InterPro" id="IPR000763">
    <property type="entry name" value="Catalase_peroxidase"/>
</dbReference>
<dbReference type="InterPro" id="IPR002016">
    <property type="entry name" value="Haem_peroxidase"/>
</dbReference>
<dbReference type="InterPro" id="IPR010255">
    <property type="entry name" value="Haem_peroxidase_sf"/>
</dbReference>
<dbReference type="InterPro" id="IPR019794">
    <property type="entry name" value="Peroxidases_AS"/>
</dbReference>
<dbReference type="InterPro" id="IPR019793">
    <property type="entry name" value="Peroxidases_heam-ligand_BS"/>
</dbReference>
<dbReference type="NCBIfam" id="TIGR00198">
    <property type="entry name" value="cat_per_HPI"/>
    <property type="match status" value="1"/>
</dbReference>
<dbReference type="NCBIfam" id="NF011635">
    <property type="entry name" value="PRK15061.1"/>
    <property type="match status" value="1"/>
</dbReference>
<dbReference type="PANTHER" id="PTHR30555:SF0">
    <property type="entry name" value="CATALASE-PEROXIDASE"/>
    <property type="match status" value="1"/>
</dbReference>
<dbReference type="PANTHER" id="PTHR30555">
    <property type="entry name" value="HYDROPEROXIDASE I, BIFUNCTIONAL CATALASE-PEROXIDASE"/>
    <property type="match status" value="1"/>
</dbReference>
<dbReference type="Pfam" id="PF00141">
    <property type="entry name" value="peroxidase"/>
    <property type="match status" value="2"/>
</dbReference>
<dbReference type="PRINTS" id="PR00460">
    <property type="entry name" value="BPEROXIDASE"/>
</dbReference>
<dbReference type="PRINTS" id="PR00458">
    <property type="entry name" value="PEROXIDASE"/>
</dbReference>
<dbReference type="SUPFAM" id="SSF48113">
    <property type="entry name" value="Heme-dependent peroxidases"/>
    <property type="match status" value="2"/>
</dbReference>
<dbReference type="PROSITE" id="PS00435">
    <property type="entry name" value="PEROXIDASE_1"/>
    <property type="match status" value="1"/>
</dbReference>
<dbReference type="PROSITE" id="PS00436">
    <property type="entry name" value="PEROXIDASE_2"/>
    <property type="match status" value="1"/>
</dbReference>
<dbReference type="PROSITE" id="PS50873">
    <property type="entry name" value="PEROXIDASE_4"/>
    <property type="match status" value="1"/>
</dbReference>
<accession>Q2JZT8</accession>
<accession>Q8RMZ6</accession>
<evidence type="ECO:0000255" key="1">
    <source>
        <dbReference type="HAMAP-Rule" id="MF_01961"/>
    </source>
</evidence>
<evidence type="ECO:0000256" key="2">
    <source>
        <dbReference type="SAM" id="MobiDB-lite"/>
    </source>
</evidence>
<evidence type="ECO:0000269" key="3">
    <source>
    </source>
</evidence>
<evidence type="ECO:0000305" key="4"/>
<proteinExistence type="evidence at transcript level"/>
<protein>
    <recommendedName>
        <fullName evidence="1">Catalase-peroxidase</fullName>
        <shortName evidence="1">CP</shortName>
        <ecNumber evidence="1">1.11.1.21</ecNumber>
    </recommendedName>
    <alternativeName>
        <fullName evidence="1">Peroxidase/catalase</fullName>
    </alternativeName>
</protein>